<reference key="1">
    <citation type="journal article" date="2001" name="J. Bacteriol.">
        <title>Genome of the bacterium Streptococcus pneumoniae strain R6.</title>
        <authorList>
            <person name="Hoskins J."/>
            <person name="Alborn W.E. Jr."/>
            <person name="Arnold J."/>
            <person name="Blaszczak L.C."/>
            <person name="Burgett S."/>
            <person name="DeHoff B.S."/>
            <person name="Estrem S.T."/>
            <person name="Fritz L."/>
            <person name="Fu D.-J."/>
            <person name="Fuller W."/>
            <person name="Geringer C."/>
            <person name="Gilmour R."/>
            <person name="Glass J.S."/>
            <person name="Khoja H."/>
            <person name="Kraft A.R."/>
            <person name="Lagace R.E."/>
            <person name="LeBlanc D.J."/>
            <person name="Lee L.N."/>
            <person name="Lefkowitz E.J."/>
            <person name="Lu J."/>
            <person name="Matsushima P."/>
            <person name="McAhren S.M."/>
            <person name="McHenney M."/>
            <person name="McLeaster K."/>
            <person name="Mundy C.W."/>
            <person name="Nicas T.I."/>
            <person name="Norris F.H."/>
            <person name="O'Gara M."/>
            <person name="Peery R.B."/>
            <person name="Robertson G.T."/>
            <person name="Rockey P."/>
            <person name="Sun P.-M."/>
            <person name="Winkler M.E."/>
            <person name="Yang Y."/>
            <person name="Young-Bellido M."/>
            <person name="Zhao G."/>
            <person name="Zook C.A."/>
            <person name="Baltz R.H."/>
            <person name="Jaskunas S.R."/>
            <person name="Rosteck P.R. Jr."/>
            <person name="Skatrud P.L."/>
            <person name="Glass J.I."/>
        </authorList>
    </citation>
    <scope>NUCLEOTIDE SEQUENCE [LARGE SCALE GENOMIC DNA]</scope>
    <source>
        <strain>ATCC BAA-255 / R6</strain>
    </source>
</reference>
<organism>
    <name type="scientific">Streptococcus pneumoniae (strain ATCC BAA-255 / R6)</name>
    <dbReference type="NCBI Taxonomy" id="171101"/>
    <lineage>
        <taxon>Bacteria</taxon>
        <taxon>Bacillati</taxon>
        <taxon>Bacillota</taxon>
        <taxon>Bacilli</taxon>
        <taxon>Lactobacillales</taxon>
        <taxon>Streptococcaceae</taxon>
        <taxon>Streptococcus</taxon>
    </lineage>
</organism>
<protein>
    <recommendedName>
        <fullName evidence="1">5-methyltetrahydropteroyltriglutamate--homocysteine methyltransferase</fullName>
        <ecNumber evidence="1">2.1.1.14</ecNumber>
    </recommendedName>
    <alternativeName>
        <fullName evidence="1">Cobalamin-independent methionine synthase</fullName>
    </alternativeName>
    <alternativeName>
        <fullName evidence="1">Methionine synthase, vitamin-B12 independent isozyme</fullName>
    </alternativeName>
</protein>
<dbReference type="EC" id="2.1.1.14" evidence="1"/>
<dbReference type="EMBL" id="AE007317">
    <property type="protein sequence ID" value="AAK99318.1"/>
    <property type="status" value="ALT_INIT"/>
    <property type="molecule type" value="Genomic_DNA"/>
</dbReference>
<dbReference type="PIR" id="B97936">
    <property type="entry name" value="B97936"/>
</dbReference>
<dbReference type="RefSeq" id="NP_358108.1">
    <property type="nucleotide sequence ID" value="NC_003098.1"/>
</dbReference>
<dbReference type="RefSeq" id="WP_000108190.1">
    <property type="nucleotide sequence ID" value="NC_003098.1"/>
</dbReference>
<dbReference type="SMR" id="Q8DQT2"/>
<dbReference type="STRING" id="171101.spr0514"/>
<dbReference type="DNASU" id="933520"/>
<dbReference type="KEGG" id="spr:spr0514"/>
<dbReference type="PATRIC" id="fig|171101.6.peg.566"/>
<dbReference type="eggNOG" id="COG0620">
    <property type="taxonomic scope" value="Bacteria"/>
</dbReference>
<dbReference type="HOGENOM" id="CLU_013175_0_0_9"/>
<dbReference type="UniPathway" id="UPA00051">
    <property type="reaction ID" value="UER00082"/>
</dbReference>
<dbReference type="Proteomes" id="UP000000586">
    <property type="component" value="Chromosome"/>
</dbReference>
<dbReference type="GO" id="GO:0003871">
    <property type="term" value="F:5-methyltetrahydropteroyltriglutamate-homocysteine S-methyltransferase activity"/>
    <property type="evidence" value="ECO:0007669"/>
    <property type="project" value="UniProtKB-UniRule"/>
</dbReference>
<dbReference type="GO" id="GO:0008270">
    <property type="term" value="F:zinc ion binding"/>
    <property type="evidence" value="ECO:0007669"/>
    <property type="project" value="InterPro"/>
</dbReference>
<dbReference type="GO" id="GO:0009086">
    <property type="term" value="P:methionine biosynthetic process"/>
    <property type="evidence" value="ECO:0007669"/>
    <property type="project" value="UniProtKB-UniRule"/>
</dbReference>
<dbReference type="GO" id="GO:0032259">
    <property type="term" value="P:methylation"/>
    <property type="evidence" value="ECO:0007669"/>
    <property type="project" value="UniProtKB-KW"/>
</dbReference>
<dbReference type="CDD" id="cd03311">
    <property type="entry name" value="CIMS_C_terminal_like"/>
    <property type="match status" value="1"/>
</dbReference>
<dbReference type="CDD" id="cd03312">
    <property type="entry name" value="CIMS_N_terminal_like"/>
    <property type="match status" value="1"/>
</dbReference>
<dbReference type="Gene3D" id="3.20.20.210">
    <property type="match status" value="2"/>
</dbReference>
<dbReference type="HAMAP" id="MF_00172">
    <property type="entry name" value="Meth_synth"/>
    <property type="match status" value="1"/>
</dbReference>
<dbReference type="InterPro" id="IPR013215">
    <property type="entry name" value="Cbl-indep_Met_Synth_N"/>
</dbReference>
<dbReference type="InterPro" id="IPR006276">
    <property type="entry name" value="Cobalamin-indep_Met_synthase"/>
</dbReference>
<dbReference type="InterPro" id="IPR002629">
    <property type="entry name" value="Met_Synth_C/arc"/>
</dbReference>
<dbReference type="InterPro" id="IPR038071">
    <property type="entry name" value="UROD/MetE-like_sf"/>
</dbReference>
<dbReference type="NCBIfam" id="TIGR01371">
    <property type="entry name" value="met_syn_B12ind"/>
    <property type="match status" value="1"/>
</dbReference>
<dbReference type="NCBIfam" id="NF003556">
    <property type="entry name" value="PRK05222.1"/>
    <property type="match status" value="1"/>
</dbReference>
<dbReference type="PANTHER" id="PTHR30519">
    <property type="entry name" value="5-METHYLTETRAHYDROPTEROYLTRIGLUTAMATE--HOMOCYSTEINE METHYLTRANSFERASE"/>
    <property type="match status" value="1"/>
</dbReference>
<dbReference type="Pfam" id="PF08267">
    <property type="entry name" value="Meth_synt_1"/>
    <property type="match status" value="1"/>
</dbReference>
<dbReference type="Pfam" id="PF01717">
    <property type="entry name" value="Meth_synt_2"/>
    <property type="match status" value="1"/>
</dbReference>
<dbReference type="PIRSF" id="PIRSF000382">
    <property type="entry name" value="MeTrfase_B12_ind"/>
    <property type="match status" value="1"/>
</dbReference>
<dbReference type="SUPFAM" id="SSF51726">
    <property type="entry name" value="UROD/MetE-like"/>
    <property type="match status" value="2"/>
</dbReference>
<sequence>MSTTIIGFPRLGEFRELKFTTEKYFRKEISEEELLAAAKDLRAKHWNIVKEKGITEIPSNDFSHYDNFLDAAFLFNVVPASVQNLDLSDLERYFALGRGYQGEKGDVRALPMKKWFNTNYHYIVPKFEKDTQVKLAGHKIFDEFQEAKELGLNTRPVLVGPFTFLQLSDFEEGVKADDFVDSFVAAYQEVFAKLADLGATRIQLDEAALVKDLTAEEKALFLNLYNKLLADKKGLEVLFQTYFGDVRDVYADLVNLPVDAIGLDFVEGKKTLELVKGGFPADKTLYVGIVNGKNIWRNNYEKSLTVLEQIPAENIVLTSSCSLLHVPFTTANEEFEPALLNHFAFAVEKLDEIRDLDAIRNGQGSEALAANKELFATERVGENAELRARIAGLTDADYTRLPAFAEREAIQEEAFKLPALPTTTIGSFPQTKEVRAKRLAYRKGELSQKEYDAFLAETIDEWIKWQEDIDFDVLVHGEFERNDMVEYFGQNLSGYLFSKNGWVQSYGMRGVKPPIIWGDVTRLNPITVKWSSYAQSRTNKPVKGMLTGPVTILNWSFPREDISIKDSTLQIALAIKDEVLDLEAAGVKIIQIDEAALREKLPLRRSDWYEDYLDWAIPAFRLVHSTVAPDTQIHTHMCYSEFTDIIPAIDNMDADVISFEASRSNLEILDELKAKNFQTEVGPGVYDIHSPRVPNEGEIDNTIEAILAKVPSKKVWINPDCGLKTRGIPETKESLIRLVEAAKAAREKL</sequence>
<name>METE_STRR6</name>
<proteinExistence type="inferred from homology"/>
<keyword id="KW-0028">Amino-acid biosynthesis</keyword>
<keyword id="KW-0479">Metal-binding</keyword>
<keyword id="KW-0486">Methionine biosynthesis</keyword>
<keyword id="KW-0489">Methyltransferase</keyword>
<keyword id="KW-1185">Reference proteome</keyword>
<keyword id="KW-0677">Repeat</keyword>
<keyword id="KW-0808">Transferase</keyword>
<keyword id="KW-0862">Zinc</keyword>
<feature type="chain" id="PRO_0000098672" description="5-methyltetrahydropteroyltriglutamate--homocysteine methyltransferase">
    <location>
        <begin position="1"/>
        <end position="749"/>
    </location>
</feature>
<feature type="active site" description="Proton donor" evidence="1">
    <location>
        <position position="689"/>
    </location>
</feature>
<feature type="binding site" evidence="1">
    <location>
        <begin position="15"/>
        <end position="18"/>
    </location>
    <ligand>
        <name>5-methyltetrahydropteroyltri-L-glutamate</name>
        <dbReference type="ChEBI" id="CHEBI:58207"/>
    </ligand>
</feature>
<feature type="binding site" evidence="1">
    <location>
        <position position="114"/>
    </location>
    <ligand>
        <name>5-methyltetrahydropteroyltri-L-glutamate</name>
        <dbReference type="ChEBI" id="CHEBI:58207"/>
    </ligand>
</feature>
<feature type="binding site" evidence="1">
    <location>
        <begin position="425"/>
        <end position="427"/>
    </location>
    <ligand>
        <name>L-homocysteine</name>
        <dbReference type="ChEBI" id="CHEBI:58199"/>
    </ligand>
</feature>
<feature type="binding site" evidence="1">
    <location>
        <begin position="425"/>
        <end position="427"/>
    </location>
    <ligand>
        <name>L-methionine</name>
        <dbReference type="ChEBI" id="CHEBI:57844"/>
    </ligand>
</feature>
<feature type="binding site" evidence="1">
    <location>
        <position position="478"/>
    </location>
    <ligand>
        <name>L-homocysteine</name>
        <dbReference type="ChEBI" id="CHEBI:58199"/>
    </ligand>
</feature>
<feature type="binding site" evidence="1">
    <location>
        <position position="478"/>
    </location>
    <ligand>
        <name>L-methionine</name>
        <dbReference type="ChEBI" id="CHEBI:57844"/>
    </ligand>
</feature>
<feature type="binding site" evidence="1">
    <location>
        <position position="555"/>
    </location>
    <ligand>
        <name>5-methyltetrahydropteroyltri-L-glutamate</name>
        <dbReference type="ChEBI" id="CHEBI:58207"/>
    </ligand>
</feature>
<feature type="binding site" evidence="1">
    <location>
        <position position="593"/>
    </location>
    <ligand>
        <name>L-homocysteine</name>
        <dbReference type="ChEBI" id="CHEBI:58199"/>
    </ligand>
</feature>
<feature type="binding site" evidence="1">
    <location>
        <position position="593"/>
    </location>
    <ligand>
        <name>L-methionine</name>
        <dbReference type="ChEBI" id="CHEBI:57844"/>
    </ligand>
</feature>
<feature type="binding site" evidence="1">
    <location>
        <position position="599"/>
    </location>
    <ligand>
        <name>5-methyltetrahydropteroyltri-L-glutamate</name>
        <dbReference type="ChEBI" id="CHEBI:58207"/>
    </ligand>
</feature>
<feature type="binding site" evidence="1">
    <location>
        <position position="636"/>
    </location>
    <ligand>
        <name>Zn(2+)</name>
        <dbReference type="ChEBI" id="CHEBI:29105"/>
        <note>catalytic</note>
    </ligand>
</feature>
<feature type="binding site" evidence="1">
    <location>
        <position position="638"/>
    </location>
    <ligand>
        <name>Zn(2+)</name>
        <dbReference type="ChEBI" id="CHEBI:29105"/>
        <note>catalytic</note>
    </ligand>
</feature>
<feature type="binding site" evidence="1">
    <location>
        <position position="660"/>
    </location>
    <ligand>
        <name>Zn(2+)</name>
        <dbReference type="ChEBI" id="CHEBI:29105"/>
        <note>catalytic</note>
    </ligand>
</feature>
<feature type="binding site" evidence="1">
    <location>
        <position position="721"/>
    </location>
    <ligand>
        <name>Zn(2+)</name>
        <dbReference type="ChEBI" id="CHEBI:29105"/>
        <note>catalytic</note>
    </ligand>
</feature>
<accession>Q8DQT2</accession>
<gene>
    <name evidence="1" type="primary">metE</name>
    <name type="ordered locus">spr0514</name>
</gene>
<evidence type="ECO:0000255" key="1">
    <source>
        <dbReference type="HAMAP-Rule" id="MF_00172"/>
    </source>
</evidence>
<evidence type="ECO:0000305" key="2"/>
<comment type="function">
    <text evidence="1">Catalyzes the transfer of a methyl group from 5-methyltetrahydrofolate to homocysteine resulting in methionine formation.</text>
</comment>
<comment type="catalytic activity">
    <reaction evidence="1">
        <text>5-methyltetrahydropteroyltri-L-glutamate + L-homocysteine = tetrahydropteroyltri-L-glutamate + L-methionine</text>
        <dbReference type="Rhea" id="RHEA:21196"/>
        <dbReference type="ChEBI" id="CHEBI:57844"/>
        <dbReference type="ChEBI" id="CHEBI:58140"/>
        <dbReference type="ChEBI" id="CHEBI:58199"/>
        <dbReference type="ChEBI" id="CHEBI:58207"/>
        <dbReference type="EC" id="2.1.1.14"/>
    </reaction>
</comment>
<comment type="cofactor">
    <cofactor evidence="1">
        <name>Zn(2+)</name>
        <dbReference type="ChEBI" id="CHEBI:29105"/>
    </cofactor>
    <text evidence="1">Binds 1 zinc ion per subunit.</text>
</comment>
<comment type="pathway">
    <text evidence="1">Amino-acid biosynthesis; L-methionine biosynthesis via de novo pathway; L-methionine from L-homocysteine (MetE route): step 1/1.</text>
</comment>
<comment type="similarity">
    <text evidence="1">Belongs to the vitamin-B12 independent methionine synthase family.</text>
</comment>
<comment type="sequence caution" evidence="2">
    <conflict type="erroneous initiation">
        <sequence resource="EMBL-CDS" id="AAK99318"/>
    </conflict>
</comment>